<protein>
    <recommendedName>
        <fullName evidence="1">Protein-lysine N-methyltransferase M142.8</fullName>
        <ecNumber evidence="1">2.1.1.-</ecNumber>
    </recommendedName>
</protein>
<gene>
    <name type="ORF">M142.8</name>
</gene>
<evidence type="ECO:0000255" key="1">
    <source>
        <dbReference type="HAMAP-Rule" id="MF_03187"/>
    </source>
</evidence>
<comment type="function">
    <text evidence="1">S-adenosyl-L-methionine-dependent protein-lysine N-methyltransferase that methylates elongation factor 1-alpha.</text>
</comment>
<comment type="subcellular location">
    <subcellularLocation>
        <location evidence="1">Cytoplasm</location>
    </subcellularLocation>
</comment>
<comment type="similarity">
    <text evidence="1">Belongs to the class I-like SAM-binding methyltransferase superfamily. EFM5 family.</text>
</comment>
<feature type="chain" id="PRO_0000311299" description="Protein-lysine N-methyltransferase M142.8">
    <location>
        <begin position="1"/>
        <end position="218"/>
    </location>
</feature>
<accession>Q5WRN3</accession>
<sequence>MSDTDDIPQLSADTLAALSMFQAEQQEKIEQLQSGIIEKIDEDWQLSQFWYDDETSRKLVAEGVAAALEGSEARPARIGCVSSPTLVKFFHETEEYKTGQIQLTLFEFDDRFGLKFPTEFVHYDYKHPTDLPAELLAKFDVIIADPPFLAAECLIKTAHSIRLLGKSDVKVLLCTGAIMEDYASRLMAMHRTSFEPRHANNLANDFSCFANYQTLTFC</sequence>
<proteinExistence type="inferred from homology"/>
<dbReference type="EC" id="2.1.1.-" evidence="1"/>
<dbReference type="EMBL" id="Z73428">
    <property type="protein sequence ID" value="CAH60777.1"/>
    <property type="molecule type" value="Genomic_DNA"/>
</dbReference>
<dbReference type="RefSeq" id="NP_001255091.1">
    <property type="nucleotide sequence ID" value="NM_001268162.4"/>
</dbReference>
<dbReference type="SMR" id="Q5WRN3"/>
<dbReference type="FunCoup" id="Q5WRN3">
    <property type="interactions" value="1337"/>
</dbReference>
<dbReference type="STRING" id="6239.M142.8a.1"/>
<dbReference type="PaxDb" id="6239-M142.8a"/>
<dbReference type="PeptideAtlas" id="Q5WRN3"/>
<dbReference type="EnsemblMetazoa" id="M142.8a.1">
    <property type="protein sequence ID" value="M142.8a.1"/>
    <property type="gene ID" value="WBGene00043057"/>
</dbReference>
<dbReference type="GeneID" id="176524"/>
<dbReference type="KEGG" id="cel:CELE_M142.8"/>
<dbReference type="UCSC" id="M142.8">
    <property type="organism name" value="c. elegans"/>
</dbReference>
<dbReference type="AGR" id="WB:WBGene00043057"/>
<dbReference type="CTD" id="176524"/>
<dbReference type="WormBase" id="M142.8a">
    <property type="protein sequence ID" value="CE37540"/>
    <property type="gene ID" value="WBGene00043057"/>
</dbReference>
<dbReference type="eggNOG" id="KOG3350">
    <property type="taxonomic scope" value="Eukaryota"/>
</dbReference>
<dbReference type="GeneTree" id="ENSGT00390000016366"/>
<dbReference type="HOGENOM" id="CLU_074410_2_1_1"/>
<dbReference type="InParanoid" id="Q5WRN3"/>
<dbReference type="OMA" id="CNFRPEH"/>
<dbReference type="OrthoDB" id="206354at2759"/>
<dbReference type="PhylomeDB" id="Q5WRN3"/>
<dbReference type="Reactome" id="R-CEL-8876725">
    <property type="pathway name" value="Protein methylation"/>
</dbReference>
<dbReference type="PRO" id="PR:Q5WRN3"/>
<dbReference type="Proteomes" id="UP000001940">
    <property type="component" value="Chromosome III"/>
</dbReference>
<dbReference type="Bgee" id="WBGene00043057">
    <property type="expression patterns" value="Expressed in germ line (C elegans) and 4 other cell types or tissues"/>
</dbReference>
<dbReference type="ExpressionAtlas" id="Q5WRN3">
    <property type="expression patterns" value="baseline and differential"/>
</dbReference>
<dbReference type="GO" id="GO:0005737">
    <property type="term" value="C:cytoplasm"/>
    <property type="evidence" value="ECO:0007669"/>
    <property type="project" value="UniProtKB-SubCell"/>
</dbReference>
<dbReference type="GO" id="GO:0003676">
    <property type="term" value="F:nucleic acid binding"/>
    <property type="evidence" value="ECO:0007669"/>
    <property type="project" value="InterPro"/>
</dbReference>
<dbReference type="GO" id="GO:0016279">
    <property type="term" value="F:protein-lysine N-methyltransferase activity"/>
    <property type="evidence" value="ECO:0007669"/>
    <property type="project" value="UniProtKB-UniRule"/>
</dbReference>
<dbReference type="GO" id="GO:0032259">
    <property type="term" value="P:methylation"/>
    <property type="evidence" value="ECO:0007669"/>
    <property type="project" value="UniProtKB-KW"/>
</dbReference>
<dbReference type="HAMAP" id="MF_03187">
    <property type="entry name" value="Methyltr_EFM5"/>
    <property type="match status" value="1"/>
</dbReference>
<dbReference type="InterPro" id="IPR002052">
    <property type="entry name" value="DNA_methylase_N6_adenine_CS"/>
</dbReference>
<dbReference type="InterPro" id="IPR019369">
    <property type="entry name" value="Efm5/EEF1AKMT1"/>
</dbReference>
<dbReference type="InterPro" id="IPR041370">
    <property type="entry name" value="Mlase_EEF1AKMT1/ZCCHC4"/>
</dbReference>
<dbReference type="InterPro" id="IPR029063">
    <property type="entry name" value="SAM-dependent_MTases_sf"/>
</dbReference>
<dbReference type="PANTHER" id="PTHR13200">
    <property type="entry name" value="EEF1A LYSINE METHYLTRANSFERASE 1"/>
    <property type="match status" value="1"/>
</dbReference>
<dbReference type="PANTHER" id="PTHR13200:SF0">
    <property type="entry name" value="EEF1A LYSINE METHYLTRANSFERASE 1"/>
    <property type="match status" value="1"/>
</dbReference>
<dbReference type="Pfam" id="PF10237">
    <property type="entry name" value="N6-adenineMlase"/>
    <property type="match status" value="1"/>
</dbReference>
<dbReference type="SUPFAM" id="SSF53335">
    <property type="entry name" value="S-adenosyl-L-methionine-dependent methyltransferases"/>
    <property type="match status" value="1"/>
</dbReference>
<name>EFM5_CAEEL</name>
<organism>
    <name type="scientific">Caenorhabditis elegans</name>
    <dbReference type="NCBI Taxonomy" id="6239"/>
    <lineage>
        <taxon>Eukaryota</taxon>
        <taxon>Metazoa</taxon>
        <taxon>Ecdysozoa</taxon>
        <taxon>Nematoda</taxon>
        <taxon>Chromadorea</taxon>
        <taxon>Rhabditida</taxon>
        <taxon>Rhabditina</taxon>
        <taxon>Rhabditomorpha</taxon>
        <taxon>Rhabditoidea</taxon>
        <taxon>Rhabditidae</taxon>
        <taxon>Peloderinae</taxon>
        <taxon>Caenorhabditis</taxon>
    </lineage>
</organism>
<reference key="1">
    <citation type="journal article" date="1998" name="Science">
        <title>Genome sequence of the nematode C. elegans: a platform for investigating biology.</title>
        <authorList>
            <consortium name="The C. elegans sequencing consortium"/>
        </authorList>
    </citation>
    <scope>NUCLEOTIDE SEQUENCE [LARGE SCALE GENOMIC DNA]</scope>
    <source>
        <strain>Bristol N2</strain>
    </source>
</reference>
<keyword id="KW-0963">Cytoplasm</keyword>
<keyword id="KW-0489">Methyltransferase</keyword>
<keyword id="KW-1185">Reference proteome</keyword>
<keyword id="KW-0808">Transferase</keyword>